<protein>
    <recommendedName>
        <fullName evidence="1">Methionine--tRNA ligase</fullName>
        <ecNumber evidence="1">6.1.1.10</ecNumber>
    </recommendedName>
    <alternativeName>
        <fullName evidence="1">Methionyl-tRNA synthetase</fullName>
        <shortName evidence="1">MetRS</shortName>
    </alternativeName>
</protein>
<reference key="1">
    <citation type="journal article" date="2000" name="Genome">
        <title>Gene content and organization of a 281-kbp contig from the genome of the extremely thermophilic archaeon, Sulfolobus solfataricus P2.</title>
        <authorList>
            <person name="Charlebois R.L."/>
            <person name="Singh R.K."/>
            <person name="Chan-Weiher C.C.-Y."/>
            <person name="Allard G."/>
            <person name="Chow C."/>
            <person name="Confalonieri F."/>
            <person name="Curtis B."/>
            <person name="Duguet M."/>
            <person name="Erauso G."/>
            <person name="Faguy D."/>
            <person name="Gaasterland T."/>
            <person name="Garrett R.A."/>
            <person name="Gordon P."/>
            <person name="Jeffries A.C."/>
            <person name="Kozera C."/>
            <person name="Kushwaha N."/>
            <person name="Lafleur E."/>
            <person name="Medina N."/>
            <person name="Peng X."/>
            <person name="Penny S.L."/>
            <person name="She Q."/>
            <person name="St Jean A."/>
            <person name="van der Oost J."/>
            <person name="Young F."/>
            <person name="Zivanovic Y."/>
            <person name="Doolittle W.F."/>
            <person name="Ragan M.A."/>
            <person name="Sensen C.W."/>
        </authorList>
    </citation>
    <scope>NUCLEOTIDE SEQUENCE [LARGE SCALE GENOMIC DNA]</scope>
    <source>
        <strain>ATCC 35092 / DSM 1617 / JCM 11322 / P2</strain>
    </source>
</reference>
<reference key="2">
    <citation type="journal article" date="2001" name="Proc. Natl. Acad. Sci. U.S.A.">
        <title>The complete genome of the crenarchaeon Sulfolobus solfataricus P2.</title>
        <authorList>
            <person name="She Q."/>
            <person name="Singh R.K."/>
            <person name="Confalonieri F."/>
            <person name="Zivanovic Y."/>
            <person name="Allard G."/>
            <person name="Awayez M.J."/>
            <person name="Chan-Weiher C.C.-Y."/>
            <person name="Clausen I.G."/>
            <person name="Curtis B.A."/>
            <person name="De Moors A."/>
            <person name="Erauso G."/>
            <person name="Fletcher C."/>
            <person name="Gordon P.M.K."/>
            <person name="Heikamp-de Jong I."/>
            <person name="Jeffries A.C."/>
            <person name="Kozera C.J."/>
            <person name="Medina N."/>
            <person name="Peng X."/>
            <person name="Thi-Ngoc H.P."/>
            <person name="Redder P."/>
            <person name="Schenk M.E."/>
            <person name="Theriault C."/>
            <person name="Tolstrup N."/>
            <person name="Charlebois R.L."/>
            <person name="Doolittle W.F."/>
            <person name="Duguet M."/>
            <person name="Gaasterland T."/>
            <person name="Garrett R.A."/>
            <person name="Ragan M.A."/>
            <person name="Sensen C.W."/>
            <person name="Van der Oost J."/>
        </authorList>
    </citation>
    <scope>NUCLEOTIDE SEQUENCE [LARGE SCALE GENOMIC DNA]</scope>
    <source>
        <strain>ATCC 35092 / DSM 1617 / JCM 11322 / P2</strain>
    </source>
</reference>
<name>SYM_SACS2</name>
<evidence type="ECO:0000255" key="1">
    <source>
        <dbReference type="HAMAP-Rule" id="MF_00098"/>
    </source>
</evidence>
<feature type="chain" id="PRO_0000139200" description="Methionine--tRNA ligase">
    <location>
        <begin position="1"/>
        <end position="573"/>
    </location>
</feature>
<feature type="short sequence motif" description="'HIGH' region">
    <location>
        <begin position="10"/>
        <end position="20"/>
    </location>
</feature>
<feature type="short sequence motif" description="'KMSKS' region">
    <location>
        <begin position="333"/>
        <end position="337"/>
    </location>
</feature>
<feature type="binding site" evidence="1">
    <location>
        <position position="143"/>
    </location>
    <ligand>
        <name>Zn(2+)</name>
        <dbReference type="ChEBI" id="CHEBI:29105"/>
    </ligand>
</feature>
<feature type="binding site" evidence="1">
    <location>
        <position position="146"/>
    </location>
    <ligand>
        <name>Zn(2+)</name>
        <dbReference type="ChEBI" id="CHEBI:29105"/>
    </ligand>
</feature>
<feature type="binding site" evidence="1">
    <location>
        <position position="156"/>
    </location>
    <ligand>
        <name>Zn(2+)</name>
        <dbReference type="ChEBI" id="CHEBI:29105"/>
    </ligand>
</feature>
<feature type="binding site" evidence="1">
    <location>
        <position position="159"/>
    </location>
    <ligand>
        <name>Zn(2+)</name>
        <dbReference type="ChEBI" id="CHEBI:29105"/>
    </ligand>
</feature>
<feature type="binding site" evidence="1">
    <location>
        <position position="336"/>
    </location>
    <ligand>
        <name>ATP</name>
        <dbReference type="ChEBI" id="CHEBI:30616"/>
    </ligand>
</feature>
<comment type="function">
    <text evidence="1">Is required not only for elongation of protein synthesis but also for the initiation of all mRNA translation through initiator tRNA(fMet) aminoacylation.</text>
</comment>
<comment type="catalytic activity">
    <reaction evidence="1">
        <text>tRNA(Met) + L-methionine + ATP = L-methionyl-tRNA(Met) + AMP + diphosphate</text>
        <dbReference type="Rhea" id="RHEA:13481"/>
        <dbReference type="Rhea" id="RHEA-COMP:9667"/>
        <dbReference type="Rhea" id="RHEA-COMP:9698"/>
        <dbReference type="ChEBI" id="CHEBI:30616"/>
        <dbReference type="ChEBI" id="CHEBI:33019"/>
        <dbReference type="ChEBI" id="CHEBI:57844"/>
        <dbReference type="ChEBI" id="CHEBI:78442"/>
        <dbReference type="ChEBI" id="CHEBI:78530"/>
        <dbReference type="ChEBI" id="CHEBI:456215"/>
        <dbReference type="EC" id="6.1.1.10"/>
    </reaction>
</comment>
<comment type="cofactor">
    <cofactor evidence="1">
        <name>Zn(2+)</name>
        <dbReference type="ChEBI" id="CHEBI:29105"/>
    </cofactor>
    <text evidence="1">Binds 1 zinc ion per subunit.</text>
</comment>
<comment type="subcellular location">
    <subcellularLocation>
        <location evidence="1">Cytoplasm</location>
    </subcellularLocation>
</comment>
<comment type="similarity">
    <text evidence="1">Belongs to the class-I aminoacyl-tRNA synthetase family. MetG type 1 subfamily.</text>
</comment>
<dbReference type="EC" id="6.1.1.10" evidence="1"/>
<dbReference type="EMBL" id="Y18930">
    <property type="protein sequence ID" value="CAB57741.1"/>
    <property type="molecule type" value="Genomic_DNA"/>
</dbReference>
<dbReference type="EMBL" id="AE006641">
    <property type="protein sequence ID" value="AAK40875.1"/>
    <property type="molecule type" value="Genomic_DNA"/>
</dbReference>
<dbReference type="PIR" id="D90202">
    <property type="entry name" value="D90202"/>
</dbReference>
<dbReference type="RefSeq" id="WP_009991068.1">
    <property type="nucleotide sequence ID" value="NC_002754.1"/>
</dbReference>
<dbReference type="SMR" id="Q9UWW2"/>
<dbReference type="FunCoup" id="Q9UWW2">
    <property type="interactions" value="354"/>
</dbReference>
<dbReference type="STRING" id="273057.SSO0558"/>
<dbReference type="PaxDb" id="273057-SSO0558"/>
<dbReference type="EnsemblBacteria" id="AAK40875">
    <property type="protein sequence ID" value="AAK40875"/>
    <property type="gene ID" value="SSO0558"/>
</dbReference>
<dbReference type="GeneID" id="44129564"/>
<dbReference type="KEGG" id="sso:SSO0558"/>
<dbReference type="PATRIC" id="fig|273057.12.peg.568"/>
<dbReference type="eggNOG" id="arCOG00810">
    <property type="taxonomic scope" value="Archaea"/>
</dbReference>
<dbReference type="HOGENOM" id="CLU_009710_1_2_2"/>
<dbReference type="InParanoid" id="Q9UWW2"/>
<dbReference type="PhylomeDB" id="Q9UWW2"/>
<dbReference type="Proteomes" id="UP000001974">
    <property type="component" value="Chromosome"/>
</dbReference>
<dbReference type="GO" id="GO:0017101">
    <property type="term" value="C:aminoacyl-tRNA synthetase multienzyme complex"/>
    <property type="evidence" value="ECO:0000318"/>
    <property type="project" value="GO_Central"/>
</dbReference>
<dbReference type="GO" id="GO:0005829">
    <property type="term" value="C:cytosol"/>
    <property type="evidence" value="ECO:0000318"/>
    <property type="project" value="GO_Central"/>
</dbReference>
<dbReference type="GO" id="GO:0005524">
    <property type="term" value="F:ATP binding"/>
    <property type="evidence" value="ECO:0007669"/>
    <property type="project" value="UniProtKB-UniRule"/>
</dbReference>
<dbReference type="GO" id="GO:0046872">
    <property type="term" value="F:metal ion binding"/>
    <property type="evidence" value="ECO:0007669"/>
    <property type="project" value="UniProtKB-KW"/>
</dbReference>
<dbReference type="GO" id="GO:0004825">
    <property type="term" value="F:methionine-tRNA ligase activity"/>
    <property type="evidence" value="ECO:0000318"/>
    <property type="project" value="GO_Central"/>
</dbReference>
<dbReference type="GO" id="GO:0006431">
    <property type="term" value="P:methionyl-tRNA aminoacylation"/>
    <property type="evidence" value="ECO:0000318"/>
    <property type="project" value="GO_Central"/>
</dbReference>
<dbReference type="CDD" id="cd07957">
    <property type="entry name" value="Anticodon_Ia_Met"/>
    <property type="match status" value="1"/>
</dbReference>
<dbReference type="CDD" id="cd00814">
    <property type="entry name" value="MetRS_core"/>
    <property type="match status" value="1"/>
</dbReference>
<dbReference type="FunFam" id="2.20.28.20:FF:000001">
    <property type="entry name" value="Methionine--tRNA ligase"/>
    <property type="match status" value="1"/>
</dbReference>
<dbReference type="Gene3D" id="3.40.50.620">
    <property type="entry name" value="HUPs"/>
    <property type="match status" value="1"/>
</dbReference>
<dbReference type="Gene3D" id="1.10.730.10">
    <property type="entry name" value="Isoleucyl-tRNA Synthetase, Domain 1"/>
    <property type="match status" value="1"/>
</dbReference>
<dbReference type="Gene3D" id="2.20.28.20">
    <property type="entry name" value="Methionyl-tRNA synthetase, Zn-domain"/>
    <property type="match status" value="1"/>
</dbReference>
<dbReference type="HAMAP" id="MF_00098">
    <property type="entry name" value="Met_tRNA_synth_type1"/>
    <property type="match status" value="1"/>
</dbReference>
<dbReference type="InterPro" id="IPR041872">
    <property type="entry name" value="Anticodon_Met"/>
</dbReference>
<dbReference type="InterPro" id="IPR023458">
    <property type="entry name" value="Met-tRNA_ligase_1"/>
</dbReference>
<dbReference type="InterPro" id="IPR014758">
    <property type="entry name" value="Met-tRNA_synth"/>
</dbReference>
<dbReference type="InterPro" id="IPR015413">
    <property type="entry name" value="Methionyl/Leucyl_tRNA_Synth"/>
</dbReference>
<dbReference type="InterPro" id="IPR033911">
    <property type="entry name" value="MetRS_core"/>
</dbReference>
<dbReference type="InterPro" id="IPR029038">
    <property type="entry name" value="MetRS_Zn"/>
</dbReference>
<dbReference type="InterPro" id="IPR014729">
    <property type="entry name" value="Rossmann-like_a/b/a_fold"/>
</dbReference>
<dbReference type="InterPro" id="IPR009080">
    <property type="entry name" value="tRNAsynth_Ia_anticodon-bd"/>
</dbReference>
<dbReference type="NCBIfam" id="TIGR00398">
    <property type="entry name" value="metG"/>
    <property type="match status" value="1"/>
</dbReference>
<dbReference type="PANTHER" id="PTHR45765">
    <property type="entry name" value="METHIONINE--TRNA LIGASE"/>
    <property type="match status" value="1"/>
</dbReference>
<dbReference type="PANTHER" id="PTHR45765:SF1">
    <property type="entry name" value="METHIONINE--TRNA LIGASE, CYTOPLASMIC"/>
    <property type="match status" value="1"/>
</dbReference>
<dbReference type="Pfam" id="PF19303">
    <property type="entry name" value="Anticodon_3"/>
    <property type="match status" value="1"/>
</dbReference>
<dbReference type="Pfam" id="PF09334">
    <property type="entry name" value="tRNA-synt_1g"/>
    <property type="match status" value="1"/>
</dbReference>
<dbReference type="PRINTS" id="PR01041">
    <property type="entry name" value="TRNASYNTHMET"/>
</dbReference>
<dbReference type="SUPFAM" id="SSF47323">
    <property type="entry name" value="Anticodon-binding domain of a subclass of class I aminoacyl-tRNA synthetases"/>
    <property type="match status" value="1"/>
</dbReference>
<dbReference type="SUPFAM" id="SSF57770">
    <property type="entry name" value="Methionyl-tRNA synthetase (MetRS), Zn-domain"/>
    <property type="match status" value="1"/>
</dbReference>
<dbReference type="SUPFAM" id="SSF52374">
    <property type="entry name" value="Nucleotidylyl transferase"/>
    <property type="match status" value="1"/>
</dbReference>
<accession>Q9UWW2</accession>
<sequence length="573" mass="66517">MKVLVTAAWPYVNSVPHLGNLIGSILSADVFARYARLRYGKENVLFVSGSDEHGTPIEIEAIKRKVNPKELTDQAHEYDRHLFLNVWKISFDNYTRTESEIHKKFVREFLLKLTKYIKVSEDEIPYCENDKLYLPDRFVKGTCPYCGFEDARGDQCDNCGKLLTPSLLVNPKCSICGKTPVFKKTKHWFFDLSEFNDKIRGWISSSNEMPDNVKSVALSWVGEGLKPRSITRDNKWGIPAPFEGAQDKSIYVWFEALLGYISAVIEYFERKGDQEKWKEYWFGPNIKSYYFIGKDNIPFHAVILPAMLMASEEEYHLPDVIAATEYLLYEGQKFSKSRKIGVWIDEAPELMDVEYWRFVLIRLRPEEKDTNFTWRETVRIVNTELNDDIGNYVNRVLSMVNRYYSGIVPEFKIDILDDNDRKIISLINETPKVVGDLFEKGKLKAGTEEMLKFVRECNAYLNMKAPWDLYKSGKEIELKNTLYIGTNSVKTIAILLYPLMPSHAQKIYEMLNMGNIENEKWDVASTLSVNPGHKIGKVNVLFKKLEPEFESKIKDKLEKIRKDIEKIRPTLLK</sequence>
<gene>
    <name evidence="1" type="primary">metG</name>
    <name type="synonym">metS</name>
    <name type="synonym">symC</name>
    <name type="ordered locus">SSO0558</name>
</gene>
<keyword id="KW-0030">Aminoacyl-tRNA synthetase</keyword>
<keyword id="KW-0067">ATP-binding</keyword>
<keyword id="KW-0963">Cytoplasm</keyword>
<keyword id="KW-0436">Ligase</keyword>
<keyword id="KW-0479">Metal-binding</keyword>
<keyword id="KW-0547">Nucleotide-binding</keyword>
<keyword id="KW-0648">Protein biosynthesis</keyword>
<keyword id="KW-1185">Reference proteome</keyword>
<keyword id="KW-0862">Zinc</keyword>
<organism>
    <name type="scientific">Saccharolobus solfataricus (strain ATCC 35092 / DSM 1617 / JCM 11322 / P2)</name>
    <name type="common">Sulfolobus solfataricus</name>
    <dbReference type="NCBI Taxonomy" id="273057"/>
    <lineage>
        <taxon>Archaea</taxon>
        <taxon>Thermoproteota</taxon>
        <taxon>Thermoprotei</taxon>
        <taxon>Sulfolobales</taxon>
        <taxon>Sulfolobaceae</taxon>
        <taxon>Saccharolobus</taxon>
    </lineage>
</organism>
<proteinExistence type="inferred from homology"/>